<dbReference type="EMBL" id="CM000070">
    <property type="protein sequence ID" value="EAL28115.2"/>
    <property type="molecule type" value="Genomic_DNA"/>
</dbReference>
<dbReference type="RefSeq" id="XP_001358972.2">
    <property type="nucleotide sequence ID" value="XM_001358935.3"/>
</dbReference>
<dbReference type="SMR" id="Q297U0"/>
<dbReference type="FunCoup" id="Q297U0">
    <property type="interactions" value="70"/>
</dbReference>
<dbReference type="STRING" id="46245.Q297U0"/>
<dbReference type="EnsemblMetazoa" id="FBtr0283438">
    <property type="protein sequence ID" value="FBpp0281876"/>
    <property type="gene ID" value="FBgn0071591"/>
</dbReference>
<dbReference type="GeneID" id="4801958"/>
<dbReference type="KEGG" id="dpo:4801958"/>
<dbReference type="CTD" id="8772"/>
<dbReference type="eggNOG" id="ENOG502SE91">
    <property type="taxonomic scope" value="Eukaryota"/>
</dbReference>
<dbReference type="HOGENOM" id="CLU_093594_0_0_1"/>
<dbReference type="InParanoid" id="Q297U0"/>
<dbReference type="OMA" id="LIEEDDC"/>
<dbReference type="Proteomes" id="UP000001819">
    <property type="component" value="Chromosome 2"/>
</dbReference>
<dbReference type="Bgee" id="FBgn0071591">
    <property type="expression patterns" value="Expressed in female reproductive system and 2 other cell types or tissues"/>
</dbReference>
<dbReference type="ExpressionAtlas" id="Q297U0">
    <property type="expression patterns" value="baseline"/>
</dbReference>
<dbReference type="GO" id="GO:0005737">
    <property type="term" value="C:cytoplasm"/>
    <property type="evidence" value="ECO:0000250"/>
    <property type="project" value="UniProtKB"/>
</dbReference>
<dbReference type="GO" id="GO:0006915">
    <property type="term" value="P:apoptotic process"/>
    <property type="evidence" value="ECO:0000250"/>
    <property type="project" value="UniProtKB"/>
</dbReference>
<dbReference type="GO" id="GO:0050829">
    <property type="term" value="P:defense response to Gram-negative bacterium"/>
    <property type="evidence" value="ECO:0000250"/>
    <property type="project" value="UniProtKB"/>
</dbReference>
<dbReference type="GO" id="GO:0007165">
    <property type="term" value="P:signal transduction"/>
    <property type="evidence" value="ECO:0007669"/>
    <property type="project" value="InterPro"/>
</dbReference>
<dbReference type="CDD" id="cd01670">
    <property type="entry name" value="Death"/>
    <property type="match status" value="1"/>
</dbReference>
<dbReference type="FunFam" id="1.10.533.10:FF:000105">
    <property type="entry name" value="Fas-associated death domain protein"/>
    <property type="match status" value="1"/>
</dbReference>
<dbReference type="FunFam" id="1.10.533.10:FF:000131">
    <property type="entry name" value="Fas-associated death domain protein"/>
    <property type="match status" value="1"/>
</dbReference>
<dbReference type="Gene3D" id="1.10.533.10">
    <property type="entry name" value="Death Domain, Fas"/>
    <property type="match status" value="2"/>
</dbReference>
<dbReference type="InterPro" id="IPR011029">
    <property type="entry name" value="DEATH-like_dom_sf"/>
</dbReference>
<dbReference type="InterPro" id="IPR000488">
    <property type="entry name" value="Death_dom"/>
</dbReference>
<dbReference type="Pfam" id="PF00531">
    <property type="entry name" value="Death"/>
    <property type="match status" value="1"/>
</dbReference>
<dbReference type="SUPFAM" id="SSF47986">
    <property type="entry name" value="DEATH domain"/>
    <property type="match status" value="2"/>
</dbReference>
<dbReference type="PROSITE" id="PS50017">
    <property type="entry name" value="DEATH_DOMAIN"/>
    <property type="match status" value="1"/>
</dbReference>
<protein>
    <recommendedName>
        <fullName>Fas-associated death domain protein</fullName>
    </recommendedName>
    <alternativeName>
        <fullName>Death domain-containing adapter protein BG4</fullName>
    </alternativeName>
</protein>
<evidence type="ECO:0000250" key="1"/>
<evidence type="ECO:0000250" key="2">
    <source>
        <dbReference type="UniProtKB" id="Q9V3B4"/>
    </source>
</evidence>
<evidence type="ECO:0000255" key="3">
    <source>
        <dbReference type="PROSITE-ProRule" id="PRU00064"/>
    </source>
</evidence>
<name>FADD_DROPS</name>
<keyword id="KW-0053">Apoptosis</keyword>
<keyword id="KW-0963">Cytoplasm</keyword>
<keyword id="KW-1185">Reference proteome</keyword>
<organism>
    <name type="scientific">Drosophila pseudoobscura pseudoobscura</name>
    <name type="common">Fruit fly</name>
    <dbReference type="NCBI Taxonomy" id="46245"/>
    <lineage>
        <taxon>Eukaryota</taxon>
        <taxon>Metazoa</taxon>
        <taxon>Ecdysozoa</taxon>
        <taxon>Arthropoda</taxon>
        <taxon>Hexapoda</taxon>
        <taxon>Insecta</taxon>
        <taxon>Pterygota</taxon>
        <taxon>Neoptera</taxon>
        <taxon>Endopterygota</taxon>
        <taxon>Diptera</taxon>
        <taxon>Brachycera</taxon>
        <taxon>Muscomorpha</taxon>
        <taxon>Ephydroidea</taxon>
        <taxon>Drosophilidae</taxon>
        <taxon>Drosophila</taxon>
        <taxon>Sophophora</taxon>
    </lineage>
</organism>
<reference key="1">
    <citation type="journal article" date="2005" name="Genome Res.">
        <title>Comparative genome sequencing of Drosophila pseudoobscura: chromosomal, gene, and cis-element evolution.</title>
        <authorList>
            <person name="Richards S."/>
            <person name="Liu Y."/>
            <person name="Bettencourt B.R."/>
            <person name="Hradecky P."/>
            <person name="Letovsky S."/>
            <person name="Nielsen R."/>
            <person name="Thornton K."/>
            <person name="Hubisz M.J."/>
            <person name="Chen R."/>
            <person name="Meisel R.P."/>
            <person name="Couronne O."/>
            <person name="Hua S."/>
            <person name="Smith M.A."/>
            <person name="Zhang P."/>
            <person name="Liu J."/>
            <person name="Bussemaker H.J."/>
            <person name="van Batenburg M.F."/>
            <person name="Howells S.L."/>
            <person name="Scherer S.E."/>
            <person name="Sodergren E."/>
            <person name="Matthews B.B."/>
            <person name="Crosby M.A."/>
            <person name="Schroeder A.J."/>
            <person name="Ortiz-Barrientos D."/>
            <person name="Rives C.M."/>
            <person name="Metzker M.L."/>
            <person name="Muzny D.M."/>
            <person name="Scott G."/>
            <person name="Steffen D."/>
            <person name="Wheeler D.A."/>
            <person name="Worley K.C."/>
            <person name="Havlak P."/>
            <person name="Durbin K.J."/>
            <person name="Egan A."/>
            <person name="Gill R."/>
            <person name="Hume J."/>
            <person name="Morgan M.B."/>
            <person name="Miner G."/>
            <person name="Hamilton C."/>
            <person name="Huang Y."/>
            <person name="Waldron L."/>
            <person name="Verduzco D."/>
            <person name="Clerc-Blankenburg K.P."/>
            <person name="Dubchak I."/>
            <person name="Noor M.A.F."/>
            <person name="Anderson W."/>
            <person name="White K.P."/>
            <person name="Clark A.G."/>
            <person name="Schaeffer S.W."/>
            <person name="Gelbart W.M."/>
            <person name="Weinstock G.M."/>
            <person name="Gibbs R.A."/>
        </authorList>
    </citation>
    <scope>NUCLEOTIDE SEQUENCE [LARGE SCALE GENOMIC DNA]</scope>
    <source>
        <strain>MV2-25 / Tucson 14011-0121.94</strain>
    </source>
</reference>
<proteinExistence type="inferred from homology"/>
<feature type="chain" id="PRO_0000271423" description="Fas-associated death domain protein">
    <location>
        <begin position="1"/>
        <end position="241"/>
    </location>
</feature>
<feature type="domain" description="Death" evidence="3">
    <location>
        <begin position="151"/>
        <end position="237"/>
    </location>
</feature>
<feature type="region of interest" description="Death-inducing">
    <location>
        <begin position="1"/>
        <end position="101"/>
    </location>
</feature>
<sequence>MPGNHWYDILKKIACEGSSDIDELKGIFEKELSKRKFDSIRNIEDLIDVLERADMLSLHNVEPLRKMSSHKPKLIEALDRYGTPVSAPREPVNIYQEERLAEELRQHLRISQAFQILSAPGVAPPAFIPAAAPTPPPPQQNYITPAAFTDRKRTAVFNKISEELGRFWRIFGRKAGIGEGTMDDIEERYPRDLKSRILHLLKLIEEDDCHDPRQLLMRLCRALTECGRNDIKRKVEQIMSH</sequence>
<gene>
    <name type="primary">Fadd</name>
    <name type="synonym">BG4</name>
    <name type="ORF">GA11540</name>
</gene>
<comment type="function">
    <text evidence="1">Component of the IMD signaling pathway and is required for the host defense against Gram-negative bacteria. Interacts with Dredd, promotes cleavage of Dredd and is necessary and sufficient for enhancing Dredd-induced apoptosis (By similarity).</text>
</comment>
<comment type="subunit">
    <text evidence="2">N-terminus interacts with Dredd. Interacts with imd (By similarity).</text>
</comment>
<comment type="subcellular location">
    <subcellularLocation>
        <location evidence="2">Cytoplasm</location>
    </subcellularLocation>
</comment>
<accession>Q297U0</accession>